<sequence>MKFKPNQTRTYDREGFKKRAACLCFRSEQEDEVLLVSSSRYPDQWIVPGGGVEPEEEPGGAAAREVYEEAGVKGKLGRLLGIFENQDRKHRTYVYVLTVTEILEDWEDSVNIGRKREWFKVEDAIKVLQCHKPVHAEYLERLKLGCSPTNGNSTVPSLPDNNALFVTAAPPSGVPSSIR</sequence>
<accession>Q99MY2</accession>
<keyword id="KW-0963">Cytoplasm</keyword>
<keyword id="KW-0378">Hydrolase</keyword>
<keyword id="KW-0460">Magnesium</keyword>
<keyword id="KW-0464">Manganese</keyword>
<keyword id="KW-0479">Metal-binding</keyword>
<keyword id="KW-1185">Reference proteome</keyword>
<keyword id="KW-0694">RNA-binding</keyword>
<gene>
    <name evidence="9" type="primary">Nudt4</name>
    <name type="synonym">Dipp2</name>
</gene>
<name>NUDT4_RAT</name>
<proteinExistence type="evidence at transcript level"/>
<reference key="1">
    <citation type="journal article" date="2001" name="Neuropsychopharmacology">
        <title>Molecular cloning of a novel isoform of diphosphoinositol polyphosphate phosphohydrolase: a potential target of lithium therapy.</title>
        <authorList>
            <person name="Hua L.V."/>
            <person name="Green M."/>
            <person name="Warsh J.J."/>
            <person name="Li P.P."/>
        </authorList>
    </citation>
    <scope>NUCLEOTIDE SEQUENCE [MRNA]</scope>
    <scope>INDUCTION</scope>
    <source>
        <strain>Sprague-Dawley</strain>
    </source>
</reference>
<protein>
    <recommendedName>
        <fullName evidence="5">Diphosphoinositol polyphosphate phosphohydrolase 2</fullName>
        <shortName evidence="5">DIPP-2</shortName>
        <ecNumber evidence="5">3.6.1.52</ecNumber>
    </recommendedName>
    <alternativeName>
        <fullName>Diadenosine 5',5'''-P1,P6-hexaphosphate hydrolase 2</fullName>
        <ecNumber evidence="5">3.6.1.61</ecNumber>
    </alternativeName>
    <alternativeName>
        <fullName>Nucleoside diphosphate-linked moiety X motif 4</fullName>
        <shortName>Nudix motif 4</shortName>
    </alternativeName>
</protein>
<evidence type="ECO:0000250" key="1"/>
<evidence type="ECO:0000250" key="2">
    <source>
        <dbReference type="UniProtKB" id="O95989"/>
    </source>
</evidence>
<evidence type="ECO:0000250" key="3">
    <source>
        <dbReference type="UniProtKB" id="Q8R2U6"/>
    </source>
</evidence>
<evidence type="ECO:0000250" key="4">
    <source>
        <dbReference type="UniProtKB" id="Q96G61"/>
    </source>
</evidence>
<evidence type="ECO:0000250" key="5">
    <source>
        <dbReference type="UniProtKB" id="Q9NZJ9"/>
    </source>
</evidence>
<evidence type="ECO:0000255" key="6">
    <source>
        <dbReference type="PROSITE-ProRule" id="PRU00794"/>
    </source>
</evidence>
<evidence type="ECO:0000269" key="7">
    <source>
    </source>
</evidence>
<evidence type="ECO:0000305" key="8"/>
<evidence type="ECO:0000312" key="9">
    <source>
        <dbReference type="RGD" id="621355"/>
    </source>
</evidence>
<comment type="function">
    <text evidence="3 5">Cleaves the beta-phosphate from diphosphoinositol polyphosphates such as PP-InsP5 (diphosphoinositol pentakisphosphate), PP-InsP4 (diphosphoinositol tetrakisphosphate) and [PP]2-InsP4 (bisdiphosphoinositol tetrakisphosphate), suggesting that it may play a role in signal transduction. Diadenosine polyphosphates, particularly Ap6A (P(1),P(6)-bis(5a-adenosyl) hexaphosphate) and Ap5A (P(1),P(5)-bis(5'-adenosyl) pentaphosphate) are downstream effectors of a signaling cascade that regulates cardiac KATP channels, can also be substrates, although with lower preference than the diphosphoinositol polyphosphates. Can also catalyze the hydrolysis of 5-phosphoribose 1-diphosphate, generating the glycolytic activator ribose 1,5-bisphosphate (By similarity). Does not play a role in U8 snoRNA decapping activity (By similarity). Binds U8 snoRNA (By similarity).</text>
</comment>
<comment type="catalytic activity">
    <reaction evidence="5">
        <text>diphospho-myo-inositol polyphosphate + H2O = myo-inositol polyphosphate + phosphate.</text>
        <dbReference type="EC" id="3.6.1.52"/>
    </reaction>
</comment>
<comment type="catalytic activity">
    <reaction evidence="5">
        <text>5-diphospho-1D-myo-inositol 1,2,3,4,6-pentakisphosphate + H2O = 1D-myo-inositol hexakisphosphate + phosphate + H(+)</text>
        <dbReference type="Rhea" id="RHEA:22384"/>
        <dbReference type="ChEBI" id="CHEBI:15377"/>
        <dbReference type="ChEBI" id="CHEBI:15378"/>
        <dbReference type="ChEBI" id="CHEBI:43474"/>
        <dbReference type="ChEBI" id="CHEBI:58130"/>
        <dbReference type="ChEBI" id="CHEBI:58628"/>
        <dbReference type="EC" id="3.6.1.52"/>
    </reaction>
    <physiologicalReaction direction="left-to-right" evidence="5">
        <dbReference type="Rhea" id="RHEA:22385"/>
    </physiologicalReaction>
</comment>
<comment type="catalytic activity">
    <reaction evidence="5">
        <text>3,5-bis(diphospho)-1D-myo-inositol 1,2,4,6-tetrakisphosphate + H2O = 3-diphospho-1D-myo-inositol 1,2,4,5,6-pentakisphosphate + phosphate + 2 H(+)</text>
        <dbReference type="Rhea" id="RHEA:56312"/>
        <dbReference type="ChEBI" id="CHEBI:15377"/>
        <dbReference type="ChEBI" id="CHEBI:15378"/>
        <dbReference type="ChEBI" id="CHEBI:43474"/>
        <dbReference type="ChEBI" id="CHEBI:140372"/>
        <dbReference type="ChEBI" id="CHEBI:140374"/>
        <dbReference type="EC" id="3.6.1.52"/>
    </reaction>
    <physiologicalReaction direction="left-to-right" evidence="5">
        <dbReference type="Rhea" id="RHEA:56313"/>
    </physiologicalReaction>
</comment>
<comment type="catalytic activity">
    <reaction evidence="5">
        <text>5-diphospho-1D-myo-inositol 1,3,4,6-tetrakisphosphate + H2O = 1D-myo-inositol 1,3,4,5,6-pentakisphosphate + phosphate + H(+)</text>
        <dbReference type="Rhea" id="RHEA:59500"/>
        <dbReference type="ChEBI" id="CHEBI:15377"/>
        <dbReference type="ChEBI" id="CHEBI:15378"/>
        <dbReference type="ChEBI" id="CHEBI:43474"/>
        <dbReference type="ChEBI" id="CHEBI:57733"/>
        <dbReference type="ChEBI" id="CHEBI:142939"/>
        <dbReference type="EC" id="3.6.1.52"/>
    </reaction>
    <physiologicalReaction direction="left-to-right" evidence="5">
        <dbReference type="Rhea" id="RHEA:59501"/>
    </physiologicalReaction>
</comment>
<comment type="catalytic activity">
    <reaction evidence="5">
        <text>P(1),P(6)-bis(5'-adenosyl) hexaphosphate + H2O = 2 ATP + 2 H(+)</text>
        <dbReference type="Rhea" id="RHEA:32043"/>
        <dbReference type="ChEBI" id="CHEBI:15377"/>
        <dbReference type="ChEBI" id="CHEBI:15378"/>
        <dbReference type="ChEBI" id="CHEBI:30616"/>
        <dbReference type="ChEBI" id="CHEBI:63740"/>
        <dbReference type="EC" id="3.6.1.61"/>
    </reaction>
    <physiologicalReaction direction="left-to-right" evidence="5">
        <dbReference type="Rhea" id="RHEA:32044"/>
    </physiologicalReaction>
</comment>
<comment type="catalytic activity">
    <reaction evidence="5">
        <text>P(1),P(5)-bis(5'-adenosyl) pentaphosphate + H2O = ADP + ATP + 2 H(+)</text>
        <dbReference type="Rhea" id="RHEA:30527"/>
        <dbReference type="ChEBI" id="CHEBI:15377"/>
        <dbReference type="ChEBI" id="CHEBI:15378"/>
        <dbReference type="ChEBI" id="CHEBI:30616"/>
        <dbReference type="ChEBI" id="CHEBI:62041"/>
        <dbReference type="ChEBI" id="CHEBI:456216"/>
        <dbReference type="EC" id="3.6.1.61"/>
    </reaction>
    <physiologicalReaction direction="left-to-right" evidence="5">
        <dbReference type="Rhea" id="RHEA:30528"/>
    </physiologicalReaction>
</comment>
<comment type="catalytic activity">
    <reaction evidence="5">
        <text>5-phospho-alpha-D-ribose 1-diphosphate + H2O = alpha-D-ribose 1,5-bisphosphate + phosphate + H(+)</text>
        <dbReference type="Rhea" id="RHEA:80811"/>
        <dbReference type="ChEBI" id="CHEBI:15377"/>
        <dbReference type="ChEBI" id="CHEBI:15378"/>
        <dbReference type="ChEBI" id="CHEBI:43474"/>
        <dbReference type="ChEBI" id="CHEBI:58017"/>
        <dbReference type="ChEBI" id="CHEBI:68688"/>
    </reaction>
    <physiologicalReaction direction="left-to-right" evidence="5">
        <dbReference type="Rhea" id="RHEA:80812"/>
    </physiologicalReaction>
</comment>
<comment type="cofactor">
    <cofactor evidence="4">
        <name>Mg(2+)</name>
        <dbReference type="ChEBI" id="CHEBI:18420"/>
    </cofactor>
    <cofactor evidence="4">
        <name>Mn(2+)</name>
        <dbReference type="ChEBI" id="CHEBI:29035"/>
    </cofactor>
    <text evidence="4">Binds 3 Mg(2+) or Mn(2+) ions per subunit.</text>
</comment>
<comment type="subcellular location">
    <subcellularLocation>
        <location evidence="5">Cytoplasm</location>
    </subcellularLocation>
</comment>
<comment type="induction">
    <text evidence="7">Overexpressed in frontal cortex upon chronic lithium treatment.</text>
</comment>
<comment type="similarity">
    <text evidence="8">Belongs to the Nudix hydrolase family. DIPP subfamily.</text>
</comment>
<feature type="chain" id="PRO_0000057061" description="Diphosphoinositol polyphosphate phosphohydrolase 2">
    <location>
        <begin position="1"/>
        <end position="179"/>
    </location>
</feature>
<feature type="domain" description="Nudix hydrolase" evidence="6">
    <location>
        <begin position="17"/>
        <end position="143"/>
    </location>
</feature>
<feature type="short sequence motif" description="Nudix box">
    <location>
        <begin position="50"/>
        <end position="71"/>
    </location>
</feature>
<feature type="active site" description="Proton acceptor" evidence="1">
    <location>
        <position position="68"/>
    </location>
</feature>
<feature type="binding site" evidence="2">
    <location>
        <position position="9"/>
    </location>
    <ligand>
        <name>substrate</name>
    </ligand>
</feature>
<feature type="binding site" evidence="2">
    <location>
        <begin position="17"/>
        <end position="19"/>
    </location>
    <ligand>
        <name>substrate</name>
    </ligand>
</feature>
<feature type="binding site" evidence="2">
    <location>
        <begin position="38"/>
        <end position="40"/>
    </location>
    <ligand>
        <name>substrate</name>
    </ligand>
</feature>
<feature type="binding site" evidence="2">
    <location>
        <position position="49"/>
    </location>
    <ligand>
        <name>Mg(2+)</name>
        <dbReference type="ChEBI" id="CHEBI:18420"/>
        <label>1</label>
    </ligand>
</feature>
<feature type="binding site" evidence="2">
    <location>
        <position position="65"/>
    </location>
    <ligand>
        <name>Mg(2+)</name>
        <dbReference type="ChEBI" id="CHEBI:18420"/>
        <label>2</label>
    </ligand>
</feature>
<feature type="binding site" evidence="2">
    <location>
        <position position="65"/>
    </location>
    <ligand>
        <name>Mg(2+)</name>
        <dbReference type="ChEBI" id="CHEBI:18420"/>
        <label>3</label>
    </ligand>
</feature>
<feature type="binding site" evidence="2">
    <location>
        <position position="69"/>
    </location>
    <ligand>
        <name>Mg(2+)</name>
        <dbReference type="ChEBI" id="CHEBI:18420"/>
        <label>1</label>
    </ligand>
</feature>
<feature type="binding site" evidence="2">
    <location>
        <begin position="88"/>
        <end position="90"/>
    </location>
    <ligand>
        <name>substrate</name>
    </ligand>
</feature>
<feature type="binding site" evidence="2">
    <location>
        <position position="114"/>
    </location>
    <ligand>
        <name>substrate</name>
    </ligand>
</feature>
<feature type="binding site" evidence="2">
    <location>
        <position position="132"/>
    </location>
    <ligand>
        <name>substrate</name>
    </ligand>
</feature>
<organism>
    <name type="scientific">Rattus norvegicus</name>
    <name type="common">Rat</name>
    <dbReference type="NCBI Taxonomy" id="10116"/>
    <lineage>
        <taxon>Eukaryota</taxon>
        <taxon>Metazoa</taxon>
        <taxon>Chordata</taxon>
        <taxon>Craniata</taxon>
        <taxon>Vertebrata</taxon>
        <taxon>Euteleostomi</taxon>
        <taxon>Mammalia</taxon>
        <taxon>Eutheria</taxon>
        <taxon>Euarchontoglires</taxon>
        <taxon>Glires</taxon>
        <taxon>Rodentia</taxon>
        <taxon>Myomorpha</taxon>
        <taxon>Muroidea</taxon>
        <taxon>Muridae</taxon>
        <taxon>Murinae</taxon>
        <taxon>Rattus</taxon>
    </lineage>
</organism>
<dbReference type="EC" id="3.6.1.52" evidence="5"/>
<dbReference type="EC" id="3.6.1.61" evidence="5"/>
<dbReference type="EMBL" id="AF253473">
    <property type="protein sequence ID" value="AAK29279.1"/>
    <property type="molecule type" value="mRNA"/>
</dbReference>
<dbReference type="RefSeq" id="NP_446050.1">
    <property type="nucleotide sequence ID" value="NM_053598.3"/>
</dbReference>
<dbReference type="SMR" id="Q99MY2"/>
<dbReference type="FunCoup" id="Q99MY2">
    <property type="interactions" value="1636"/>
</dbReference>
<dbReference type="IntAct" id="Q99MY2">
    <property type="interactions" value="1"/>
</dbReference>
<dbReference type="STRING" id="10116.ENSRNOP00000012363"/>
<dbReference type="iPTMnet" id="Q99MY2"/>
<dbReference type="PhosphoSitePlus" id="Q99MY2"/>
<dbReference type="jPOST" id="Q99MY2"/>
<dbReference type="PaxDb" id="10116-ENSRNOP00000012363"/>
<dbReference type="GeneID" id="94267"/>
<dbReference type="KEGG" id="rno:94267"/>
<dbReference type="UCSC" id="RGD:621355">
    <property type="organism name" value="rat"/>
</dbReference>
<dbReference type="AGR" id="RGD:621355"/>
<dbReference type="CTD" id="11163"/>
<dbReference type="RGD" id="621355">
    <property type="gene designation" value="Nudt4"/>
</dbReference>
<dbReference type="VEuPathDB" id="HostDB:ENSRNOG00000009094"/>
<dbReference type="eggNOG" id="KOG2839">
    <property type="taxonomic scope" value="Eukaryota"/>
</dbReference>
<dbReference type="HOGENOM" id="CLU_037162_1_0_1"/>
<dbReference type="InParanoid" id="Q99MY2"/>
<dbReference type="PhylomeDB" id="Q99MY2"/>
<dbReference type="TreeFam" id="TF106349"/>
<dbReference type="Reactome" id="R-RNO-1855167">
    <property type="pathway name" value="Synthesis of pyrophosphates in the cytosol"/>
</dbReference>
<dbReference type="PRO" id="PR:Q99MY2"/>
<dbReference type="Proteomes" id="UP000002494">
    <property type="component" value="Chromosome 7"/>
</dbReference>
<dbReference type="Bgee" id="ENSRNOG00000009094">
    <property type="expression patterns" value="Expressed in kidney and 20 other cell types or tissues"/>
</dbReference>
<dbReference type="GO" id="GO:0005737">
    <property type="term" value="C:cytoplasm"/>
    <property type="evidence" value="ECO:0000318"/>
    <property type="project" value="GO_Central"/>
</dbReference>
<dbReference type="GO" id="GO:0005634">
    <property type="term" value="C:nucleus"/>
    <property type="evidence" value="ECO:0000318"/>
    <property type="project" value="GO_Central"/>
</dbReference>
<dbReference type="GO" id="GO:0034431">
    <property type="term" value="F:bis(5'-adenosyl)-hexaphosphatase activity"/>
    <property type="evidence" value="ECO:0000318"/>
    <property type="project" value="GO_Central"/>
</dbReference>
<dbReference type="GO" id="GO:0034432">
    <property type="term" value="F:bis(5'-adenosyl)-pentaphosphatase activity"/>
    <property type="evidence" value="ECO:0000318"/>
    <property type="project" value="GO_Central"/>
</dbReference>
<dbReference type="GO" id="GO:0008486">
    <property type="term" value="F:diphosphoinositol-polyphosphate diphosphatase activity"/>
    <property type="evidence" value="ECO:0000250"/>
    <property type="project" value="UniProtKB"/>
</dbReference>
<dbReference type="GO" id="GO:0000298">
    <property type="term" value="F:endopolyphosphatase activity"/>
    <property type="evidence" value="ECO:0000318"/>
    <property type="project" value="GO_Central"/>
</dbReference>
<dbReference type="GO" id="GO:0052848">
    <property type="term" value="F:inositol-3,5-bisdiphosphate-2,3,4,6-tetrakisphosphate 5-diphosphatase activity"/>
    <property type="evidence" value="ECO:0007669"/>
    <property type="project" value="RHEA"/>
</dbReference>
<dbReference type="GO" id="GO:0052845">
    <property type="term" value="F:inositol-5-diphosphate-1,2,3,4,6-pentakisphosphate diphosphatase activity"/>
    <property type="evidence" value="ECO:0007669"/>
    <property type="project" value="RHEA"/>
</dbReference>
<dbReference type="GO" id="GO:0106211">
    <property type="term" value="F:inositol-5-diphosphate-1,3,4,6-tetrakisphosphate diphosphatase activity"/>
    <property type="evidence" value="ECO:0007669"/>
    <property type="project" value="RHEA"/>
</dbReference>
<dbReference type="GO" id="GO:0046872">
    <property type="term" value="F:metal ion binding"/>
    <property type="evidence" value="ECO:0007669"/>
    <property type="project" value="UniProtKB-KW"/>
</dbReference>
<dbReference type="GO" id="GO:0030515">
    <property type="term" value="F:snoRNA binding"/>
    <property type="evidence" value="ECO:0000250"/>
    <property type="project" value="UniProtKB"/>
</dbReference>
<dbReference type="GO" id="GO:1901911">
    <property type="term" value="P:adenosine 5'-(hexahydrogen pentaphosphate) catabolic process"/>
    <property type="evidence" value="ECO:0000318"/>
    <property type="project" value="GO_Central"/>
</dbReference>
<dbReference type="GO" id="GO:1901909">
    <property type="term" value="P:diadenosine hexaphosphate catabolic process"/>
    <property type="evidence" value="ECO:0000318"/>
    <property type="project" value="GO_Central"/>
</dbReference>
<dbReference type="GO" id="GO:1901907">
    <property type="term" value="P:diadenosine pentaphosphate catabolic process"/>
    <property type="evidence" value="ECO:0000318"/>
    <property type="project" value="GO_Central"/>
</dbReference>
<dbReference type="GO" id="GO:0071543">
    <property type="term" value="P:diphosphoinositol polyphosphate metabolic process"/>
    <property type="evidence" value="ECO:0000318"/>
    <property type="project" value="GO_Central"/>
</dbReference>
<dbReference type="GO" id="GO:0046488">
    <property type="term" value="P:phosphatidylinositol metabolic process"/>
    <property type="evidence" value="ECO:0000303"/>
    <property type="project" value="RGD"/>
</dbReference>
<dbReference type="CDD" id="cd04666">
    <property type="entry name" value="NUDIX_DIPP2_like_Nudt4"/>
    <property type="match status" value="1"/>
</dbReference>
<dbReference type="FunFam" id="3.90.79.10:FF:000002">
    <property type="entry name" value="diphosphoinositol polyphosphate phosphohydrolase 1"/>
    <property type="match status" value="1"/>
</dbReference>
<dbReference type="Gene3D" id="3.90.79.10">
    <property type="entry name" value="Nucleoside Triphosphate Pyrophosphohydrolase"/>
    <property type="match status" value="1"/>
</dbReference>
<dbReference type="InterPro" id="IPR047198">
    <property type="entry name" value="DDP-like_NUDIX"/>
</dbReference>
<dbReference type="InterPro" id="IPR015797">
    <property type="entry name" value="NUDIX_hydrolase-like_dom_sf"/>
</dbReference>
<dbReference type="InterPro" id="IPR020084">
    <property type="entry name" value="NUDIX_hydrolase_CS"/>
</dbReference>
<dbReference type="InterPro" id="IPR000086">
    <property type="entry name" value="NUDIX_hydrolase_dom"/>
</dbReference>
<dbReference type="PANTHER" id="PTHR12629">
    <property type="entry name" value="DIPHOSPHOINOSITOL POLYPHOSPHATE PHOSPHOHYDROLASE"/>
    <property type="match status" value="1"/>
</dbReference>
<dbReference type="PANTHER" id="PTHR12629:SF6">
    <property type="entry name" value="DIPHOSPHOINOSITOL POLYPHOSPHATE PHOSPHOHYDROLASE 2-RELATED"/>
    <property type="match status" value="1"/>
</dbReference>
<dbReference type="Pfam" id="PF00293">
    <property type="entry name" value="NUDIX"/>
    <property type="match status" value="1"/>
</dbReference>
<dbReference type="SUPFAM" id="SSF55811">
    <property type="entry name" value="Nudix"/>
    <property type="match status" value="1"/>
</dbReference>
<dbReference type="PROSITE" id="PS51462">
    <property type="entry name" value="NUDIX"/>
    <property type="match status" value="1"/>
</dbReference>
<dbReference type="PROSITE" id="PS00893">
    <property type="entry name" value="NUDIX_BOX"/>
    <property type="match status" value="1"/>
</dbReference>